<name>QUEA_FRATW</name>
<sequence length="338" mass="38312">MKTDDFDYKLPEELIASYPLENRDASRLLKLNKQTGEIADYKFTDFIDFINPGDLLVFNNSKVMLARLYGSKTTGAKLEYLIERIKNPKLFETHIKANRSPAIGSEIYVEDTLAKVLDKDGGMYLLEIQGDKDIYQLMEEFGHIPLPPYMKRDDEEFDAERYQTVYAQDLGSVAAPTAGLHFSKELMQQIKDKGVDIAYITLHVGSGTFKPVQVDDVESHKMHAEVISVPVEVCQKIRQTKENGGRVIAIGTTSVRSLETAGQNGQIEPYQGETDIFLYPGKKFNVVDAMITNFHLPKSTLIMLVSAFADKEKIIKAYEHAIAERYRFFSYGDAMFIF</sequence>
<gene>
    <name evidence="1" type="primary">queA</name>
    <name type="ordered locus">FTW_0731</name>
</gene>
<organism>
    <name type="scientific">Francisella tularensis subsp. tularensis (strain WY96-3418)</name>
    <dbReference type="NCBI Taxonomy" id="418136"/>
    <lineage>
        <taxon>Bacteria</taxon>
        <taxon>Pseudomonadati</taxon>
        <taxon>Pseudomonadota</taxon>
        <taxon>Gammaproteobacteria</taxon>
        <taxon>Thiotrichales</taxon>
        <taxon>Francisellaceae</taxon>
        <taxon>Francisella</taxon>
    </lineage>
</organism>
<comment type="function">
    <text evidence="1">Transfers and isomerizes the ribose moiety from AdoMet to the 7-aminomethyl group of 7-deazaguanine (preQ1-tRNA) to give epoxyqueuosine (oQ-tRNA).</text>
</comment>
<comment type="catalytic activity">
    <reaction evidence="1">
        <text>7-aminomethyl-7-carbaguanosine(34) in tRNA + S-adenosyl-L-methionine = epoxyqueuosine(34) in tRNA + adenine + L-methionine + 2 H(+)</text>
        <dbReference type="Rhea" id="RHEA:32155"/>
        <dbReference type="Rhea" id="RHEA-COMP:10342"/>
        <dbReference type="Rhea" id="RHEA-COMP:18582"/>
        <dbReference type="ChEBI" id="CHEBI:15378"/>
        <dbReference type="ChEBI" id="CHEBI:16708"/>
        <dbReference type="ChEBI" id="CHEBI:57844"/>
        <dbReference type="ChEBI" id="CHEBI:59789"/>
        <dbReference type="ChEBI" id="CHEBI:82833"/>
        <dbReference type="ChEBI" id="CHEBI:194443"/>
        <dbReference type="EC" id="2.4.99.17"/>
    </reaction>
</comment>
<comment type="pathway">
    <text evidence="1">tRNA modification; tRNA-queuosine biosynthesis.</text>
</comment>
<comment type="subunit">
    <text evidence="1">Monomer.</text>
</comment>
<comment type="subcellular location">
    <subcellularLocation>
        <location evidence="1">Cytoplasm</location>
    </subcellularLocation>
</comment>
<comment type="similarity">
    <text evidence="1">Belongs to the QueA family.</text>
</comment>
<keyword id="KW-0963">Cytoplasm</keyword>
<keyword id="KW-0671">Queuosine biosynthesis</keyword>
<keyword id="KW-0949">S-adenosyl-L-methionine</keyword>
<keyword id="KW-0808">Transferase</keyword>
<dbReference type="EC" id="2.4.99.17" evidence="1"/>
<dbReference type="EMBL" id="CP000608">
    <property type="protein sequence ID" value="ABO46614.1"/>
    <property type="molecule type" value="Genomic_DNA"/>
</dbReference>
<dbReference type="RefSeq" id="WP_003025806.1">
    <property type="nucleotide sequence ID" value="NC_009257.1"/>
</dbReference>
<dbReference type="SMR" id="A4IXG2"/>
<dbReference type="KEGG" id="ftw:FTW_0731"/>
<dbReference type="HOGENOM" id="CLU_039110_1_0_6"/>
<dbReference type="UniPathway" id="UPA00392"/>
<dbReference type="GO" id="GO:0005737">
    <property type="term" value="C:cytoplasm"/>
    <property type="evidence" value="ECO:0007669"/>
    <property type="project" value="UniProtKB-SubCell"/>
</dbReference>
<dbReference type="GO" id="GO:0051075">
    <property type="term" value="F:S-adenosylmethionine:tRNA ribosyltransferase-isomerase activity"/>
    <property type="evidence" value="ECO:0007669"/>
    <property type="project" value="UniProtKB-EC"/>
</dbReference>
<dbReference type="GO" id="GO:0008616">
    <property type="term" value="P:queuosine biosynthetic process"/>
    <property type="evidence" value="ECO:0007669"/>
    <property type="project" value="UniProtKB-UniRule"/>
</dbReference>
<dbReference type="GO" id="GO:0002099">
    <property type="term" value="P:tRNA wobble guanine modification"/>
    <property type="evidence" value="ECO:0007669"/>
    <property type="project" value="TreeGrafter"/>
</dbReference>
<dbReference type="FunFam" id="3.40.1780.10:FF:000001">
    <property type="entry name" value="S-adenosylmethionine:tRNA ribosyltransferase-isomerase"/>
    <property type="match status" value="1"/>
</dbReference>
<dbReference type="Gene3D" id="2.40.10.240">
    <property type="entry name" value="QueA-like"/>
    <property type="match status" value="1"/>
</dbReference>
<dbReference type="Gene3D" id="3.40.1780.10">
    <property type="entry name" value="QueA-like"/>
    <property type="match status" value="1"/>
</dbReference>
<dbReference type="HAMAP" id="MF_00113">
    <property type="entry name" value="QueA"/>
    <property type="match status" value="1"/>
</dbReference>
<dbReference type="InterPro" id="IPR003699">
    <property type="entry name" value="QueA"/>
</dbReference>
<dbReference type="InterPro" id="IPR042118">
    <property type="entry name" value="QueA_dom1"/>
</dbReference>
<dbReference type="InterPro" id="IPR042119">
    <property type="entry name" value="QueA_dom2"/>
</dbReference>
<dbReference type="InterPro" id="IPR036100">
    <property type="entry name" value="QueA_sf"/>
</dbReference>
<dbReference type="NCBIfam" id="NF001140">
    <property type="entry name" value="PRK00147.1"/>
    <property type="match status" value="1"/>
</dbReference>
<dbReference type="NCBIfam" id="TIGR00113">
    <property type="entry name" value="queA"/>
    <property type="match status" value="1"/>
</dbReference>
<dbReference type="PANTHER" id="PTHR30307">
    <property type="entry name" value="S-ADENOSYLMETHIONINE:TRNA RIBOSYLTRANSFERASE-ISOMERASE"/>
    <property type="match status" value="1"/>
</dbReference>
<dbReference type="PANTHER" id="PTHR30307:SF0">
    <property type="entry name" value="S-ADENOSYLMETHIONINE:TRNA RIBOSYLTRANSFERASE-ISOMERASE"/>
    <property type="match status" value="1"/>
</dbReference>
<dbReference type="Pfam" id="PF02547">
    <property type="entry name" value="Queuosine_synth"/>
    <property type="match status" value="1"/>
</dbReference>
<dbReference type="SUPFAM" id="SSF111337">
    <property type="entry name" value="QueA-like"/>
    <property type="match status" value="1"/>
</dbReference>
<evidence type="ECO:0000255" key="1">
    <source>
        <dbReference type="HAMAP-Rule" id="MF_00113"/>
    </source>
</evidence>
<protein>
    <recommendedName>
        <fullName evidence="1">S-adenosylmethionine:tRNA ribosyltransferase-isomerase</fullName>
        <ecNumber evidence="1">2.4.99.17</ecNumber>
    </recommendedName>
    <alternativeName>
        <fullName evidence="1">Queuosine biosynthesis protein QueA</fullName>
    </alternativeName>
</protein>
<reference key="1">
    <citation type="journal article" date="2007" name="PLoS ONE">
        <title>Complete genomic characterization of a pathogenic A.II strain of Francisella tularensis subspecies tularensis.</title>
        <authorList>
            <person name="Beckstrom-Sternberg S.M."/>
            <person name="Auerbach R.K."/>
            <person name="Godbole S."/>
            <person name="Pearson J.V."/>
            <person name="Beckstrom-Sternberg J.S."/>
            <person name="Deng Z."/>
            <person name="Munk C."/>
            <person name="Kubota K."/>
            <person name="Zhou Y."/>
            <person name="Bruce D."/>
            <person name="Noronha J."/>
            <person name="Scheuermann R.H."/>
            <person name="Wang A."/>
            <person name="Wei X."/>
            <person name="Wang J."/>
            <person name="Hao J."/>
            <person name="Wagner D.M."/>
            <person name="Brettin T.S."/>
            <person name="Brown N."/>
            <person name="Gilna P."/>
            <person name="Keim P.S."/>
        </authorList>
    </citation>
    <scope>NUCLEOTIDE SEQUENCE [LARGE SCALE GENOMIC DNA]</scope>
    <source>
        <strain>WY96-3418</strain>
    </source>
</reference>
<accession>A4IXG2</accession>
<feature type="chain" id="PRO_1000071339" description="S-adenosylmethionine:tRNA ribosyltransferase-isomerase">
    <location>
        <begin position="1"/>
        <end position="338"/>
    </location>
</feature>
<proteinExistence type="inferred from homology"/>